<evidence type="ECO:0000250" key="1"/>
<evidence type="ECO:0000255" key="2">
    <source>
        <dbReference type="PROSITE-ProRule" id="PRU00541"/>
    </source>
</evidence>
<evidence type="ECO:0000305" key="3"/>
<accession>O57227</accession>
<sequence>MSLLKMEYNLYAELKKMTCGQPLSLFNEDGDFVEVEPGSSFKFLIPKGFYASPSVKTSLVFETLTTTDNKITSINPTNAPKLYPLQRKVVSEVVSNMRKMIESKRPLYITLHLACGFGKTITTCYLMATHGRKTVICVPNKMLIHQWKTQVEAVGLEHKISIDGVSSLLKELKTQSPDVLIVVSRHLTNDAFCKYINKHYDLFILDESHTYNLMNNTAVTRFLAYYPPMMCYFLTATPRPSNRIYCNSIINIAKLSDLKKTIYAVDSFFEPYSTDNIRHMIKRLDGPSNKYHIYTEKLLSVDEPRNQLILNTLVEEFKSGTINRILVITKLREHMVFFYKRLLDFFGSEVVFIGDAQNRRTPDMVKSIKELNRFIFVSTLFYSGTGLDIPSLDSLFICSAVINNMQIEQLLGRVCRETELLDRTVYVFPSTSIKEIKYMIGNFVQRIISLSVDKLGFKQKSYRKHQESDPTSVCTTSSREERVLNRIFNSQNR</sequence>
<dbReference type="EC" id="3.6.4.-"/>
<dbReference type="EMBL" id="U94848">
    <property type="protein sequence ID" value="AAB96522.1"/>
    <property type="molecule type" value="Genomic_DNA"/>
</dbReference>
<dbReference type="EMBL" id="AY603355">
    <property type="protein sequence ID" value="AAT10528.1"/>
    <property type="molecule type" value="Genomic_DNA"/>
</dbReference>
<dbReference type="PIR" id="T37405">
    <property type="entry name" value="T37405"/>
</dbReference>
<dbReference type="SMR" id="O57227"/>
<dbReference type="Proteomes" id="UP000159908">
    <property type="component" value="Segment"/>
</dbReference>
<dbReference type="Proteomes" id="UP000172909">
    <property type="component" value="Segment"/>
</dbReference>
<dbReference type="GO" id="GO:0044423">
    <property type="term" value="C:virion component"/>
    <property type="evidence" value="ECO:0007669"/>
    <property type="project" value="UniProtKB-KW"/>
</dbReference>
<dbReference type="GO" id="GO:0005524">
    <property type="term" value="F:ATP binding"/>
    <property type="evidence" value="ECO:0007669"/>
    <property type="project" value="UniProtKB-KW"/>
</dbReference>
<dbReference type="GO" id="GO:0003677">
    <property type="term" value="F:DNA binding"/>
    <property type="evidence" value="ECO:0007669"/>
    <property type="project" value="UniProtKB-KW"/>
</dbReference>
<dbReference type="GO" id="GO:0004386">
    <property type="term" value="F:helicase activity"/>
    <property type="evidence" value="ECO:0007669"/>
    <property type="project" value="UniProtKB-KW"/>
</dbReference>
<dbReference type="GO" id="GO:0016787">
    <property type="term" value="F:hydrolase activity"/>
    <property type="evidence" value="ECO:0007669"/>
    <property type="project" value="UniProtKB-KW"/>
</dbReference>
<dbReference type="CDD" id="cd18785">
    <property type="entry name" value="SF2_C"/>
    <property type="match status" value="1"/>
</dbReference>
<dbReference type="Gene3D" id="3.40.50.300">
    <property type="entry name" value="P-loop containing nucleotide triphosphate hydrolases"/>
    <property type="match status" value="2"/>
</dbReference>
<dbReference type="InterPro" id="IPR006935">
    <property type="entry name" value="Helicase/UvrB_N"/>
</dbReference>
<dbReference type="InterPro" id="IPR014001">
    <property type="entry name" value="Helicase_ATP-bd"/>
</dbReference>
<dbReference type="InterPro" id="IPR050742">
    <property type="entry name" value="Helicase_Restrict-Modif_Enz"/>
</dbReference>
<dbReference type="InterPro" id="IPR027417">
    <property type="entry name" value="P-loop_NTPase"/>
</dbReference>
<dbReference type="PANTHER" id="PTHR47396:SF1">
    <property type="entry name" value="ATP-DEPENDENT HELICASE IRC3-RELATED"/>
    <property type="match status" value="1"/>
</dbReference>
<dbReference type="PANTHER" id="PTHR47396">
    <property type="entry name" value="TYPE I RESTRICTION ENZYME ECOKI R PROTEIN"/>
    <property type="match status" value="1"/>
</dbReference>
<dbReference type="Pfam" id="PF04851">
    <property type="entry name" value="ResIII"/>
    <property type="match status" value="1"/>
</dbReference>
<dbReference type="SMART" id="SM00487">
    <property type="entry name" value="DEXDc"/>
    <property type="match status" value="1"/>
</dbReference>
<dbReference type="SUPFAM" id="SSF52540">
    <property type="entry name" value="P-loop containing nucleoside triphosphate hydrolases"/>
    <property type="match status" value="1"/>
</dbReference>
<dbReference type="PROSITE" id="PS51192">
    <property type="entry name" value="HELICASE_ATP_BIND_1"/>
    <property type="match status" value="1"/>
</dbReference>
<comment type="function">
    <text evidence="1">DNA helicase which seems to act as a postreplicative transcription termination factor. Involved in ATP-dependent release of nascent RNA. Forms a stable complex with single-stranded DNA, and to a lesser extent RNA (By similarity).</text>
</comment>
<comment type="subunit">
    <text evidence="1">Interacts with G2. Might be part of a transcription complex composed at least of G2, A18, and H5.</text>
</comment>
<comment type="subcellular location">
    <subcellularLocation>
        <location evidence="1">Virion</location>
    </subcellularLocation>
    <text evidence="1">Localizes to the virion core.</text>
</comment>
<comment type="similarity">
    <text evidence="3">Belongs to the helicase family. Poxviruses subfamily.</text>
</comment>
<gene>
    <name type="ordered locus">MVA129R</name>
    <name type="ordered locus">ACAM3000_MVA_129</name>
</gene>
<organismHost>
    <name type="scientific">Homo sapiens</name>
    <name type="common">Human</name>
    <dbReference type="NCBI Taxonomy" id="9606"/>
</organismHost>
<feature type="chain" id="PRO_0000102175" description="Transcript termination protein A18">
    <location>
        <begin position="1"/>
        <end position="493"/>
    </location>
</feature>
<feature type="domain" description="Helicase ATP-binding" evidence="2">
    <location>
        <begin position="100"/>
        <end position="256"/>
    </location>
</feature>
<feature type="short sequence motif" description="DESH box">
    <location>
        <begin position="206"/>
        <end position="209"/>
    </location>
</feature>
<feature type="binding site" evidence="2">
    <location>
        <begin position="113"/>
        <end position="120"/>
    </location>
    <ligand>
        <name>ATP</name>
        <dbReference type="ChEBI" id="CHEBI:30616"/>
    </ligand>
</feature>
<protein>
    <recommendedName>
        <fullName>Transcript termination protein A18</fullName>
        <ecNumber>3.6.4.-</ecNumber>
    </recommendedName>
    <alternativeName>
        <fullName>56 kDa abortive late protein</fullName>
    </alternativeName>
</protein>
<name>A18_VACCA</name>
<reference key="1">
    <citation type="journal article" date="1998" name="Virology">
        <title>The complete genomic sequence of the modified vaccinia Ankara strain: comparison with other orthopoxviruses.</title>
        <authorList>
            <person name="Antoine G."/>
            <person name="Scheiflinger F."/>
            <person name="Dorner F."/>
            <person name="Falkner F.G."/>
        </authorList>
    </citation>
    <scope>NUCLEOTIDE SEQUENCE [LARGE SCALE GENOMIC DNA]</scope>
</reference>
<reference key="2">
    <citation type="submission" date="2004-04" db="EMBL/GenBank/DDBJ databases">
        <authorList>
            <person name="Esposito J.J."/>
            <person name="Frace M."/>
            <person name="Sammons S.A."/>
            <person name="Olsen-Rasmussen M.S."/>
            <person name="Osborne J."/>
            <person name="Khristova M."/>
            <person name="Wohlhueter R.M."/>
        </authorList>
    </citation>
    <scope>NUCLEOTIDE SEQUENCE [LARGE SCALE GENOMIC DNA]</scope>
    <source>
        <strain>Isolate Acambis 3000</strain>
    </source>
</reference>
<proteinExistence type="inferred from homology"/>
<organism>
    <name type="scientific">Vaccinia virus (strain Ankara)</name>
    <name type="common">VACV</name>
    <dbReference type="NCBI Taxonomy" id="126794"/>
    <lineage>
        <taxon>Viruses</taxon>
        <taxon>Varidnaviria</taxon>
        <taxon>Bamfordvirae</taxon>
        <taxon>Nucleocytoviricota</taxon>
        <taxon>Pokkesviricetes</taxon>
        <taxon>Chitovirales</taxon>
        <taxon>Poxviridae</taxon>
        <taxon>Chordopoxvirinae</taxon>
        <taxon>Orthopoxvirus</taxon>
        <taxon>Vaccinia virus</taxon>
    </lineage>
</organism>
<keyword id="KW-0067">ATP-binding</keyword>
<keyword id="KW-0238">DNA-binding</keyword>
<keyword id="KW-0347">Helicase</keyword>
<keyword id="KW-0378">Hydrolase</keyword>
<keyword id="KW-0426">Late protein</keyword>
<keyword id="KW-0547">Nucleotide-binding</keyword>
<keyword id="KW-0804">Transcription</keyword>
<keyword id="KW-0946">Virion</keyword>